<name>FB72_ARATH</name>
<proteinExistence type="predicted"/>
<organism>
    <name type="scientific">Arabidopsis thaliana</name>
    <name type="common">Mouse-ear cress</name>
    <dbReference type="NCBI Taxonomy" id="3702"/>
    <lineage>
        <taxon>Eukaryota</taxon>
        <taxon>Viridiplantae</taxon>
        <taxon>Streptophyta</taxon>
        <taxon>Embryophyta</taxon>
        <taxon>Tracheophyta</taxon>
        <taxon>Spermatophyta</taxon>
        <taxon>Magnoliopsida</taxon>
        <taxon>eudicotyledons</taxon>
        <taxon>Gunneridae</taxon>
        <taxon>Pentapetalae</taxon>
        <taxon>rosids</taxon>
        <taxon>malvids</taxon>
        <taxon>Brassicales</taxon>
        <taxon>Brassicaceae</taxon>
        <taxon>Camelineae</taxon>
        <taxon>Arabidopsis</taxon>
    </lineage>
</organism>
<dbReference type="EMBL" id="AC007234">
    <property type="protein sequence ID" value="AAF23838.1"/>
    <property type="molecule type" value="Genomic_DNA"/>
</dbReference>
<dbReference type="EMBL" id="CP002684">
    <property type="protein sequence ID" value="AEE34421.1"/>
    <property type="molecule type" value="Genomic_DNA"/>
</dbReference>
<dbReference type="BioGRID" id="28109">
    <property type="interactions" value="4"/>
</dbReference>
<dbReference type="STRING" id="3702.Q9SHX9"/>
<dbReference type="PaxDb" id="3702-AT1G65770.1"/>
<dbReference type="EnsemblPlants" id="AT1G65770.1">
    <property type="protein sequence ID" value="AT1G65770.1"/>
    <property type="gene ID" value="AT1G65770"/>
</dbReference>
<dbReference type="GeneID" id="842888"/>
<dbReference type="Gramene" id="AT1G65770.1">
    <property type="protein sequence ID" value="AT1G65770.1"/>
    <property type="gene ID" value="AT1G65770"/>
</dbReference>
<dbReference type="KEGG" id="ath:AT1G65770"/>
<dbReference type="Araport" id="AT1G65770"/>
<dbReference type="TAIR" id="AT1G65770">
    <property type="gene designation" value="AMR1"/>
</dbReference>
<dbReference type="eggNOG" id="ENOG502QW71">
    <property type="taxonomic scope" value="Eukaryota"/>
</dbReference>
<dbReference type="HOGENOM" id="CLU_019286_1_0_1"/>
<dbReference type="InParanoid" id="Q9SHX9"/>
<dbReference type="OMA" id="LMAITRE"/>
<dbReference type="PhylomeDB" id="Q9SHX9"/>
<dbReference type="PRO" id="PR:Q9SHX9"/>
<dbReference type="Proteomes" id="UP000006548">
    <property type="component" value="Chromosome 1"/>
</dbReference>
<dbReference type="GO" id="GO:2000083">
    <property type="term" value="P:negative regulation of L-ascorbic acid biosynthetic process"/>
    <property type="evidence" value="ECO:0000315"/>
    <property type="project" value="TAIR"/>
</dbReference>
<dbReference type="InterPro" id="IPR005174">
    <property type="entry name" value="KIB1-4_b-propeller"/>
</dbReference>
<dbReference type="InterPro" id="IPR051304">
    <property type="entry name" value="SCF_F-box_domain"/>
</dbReference>
<dbReference type="PANTHER" id="PTHR47123:SF25">
    <property type="entry name" value="F-BOX PROTEIN"/>
    <property type="match status" value="1"/>
</dbReference>
<dbReference type="PANTHER" id="PTHR47123">
    <property type="entry name" value="F-BOX PROTEIN SKIP23"/>
    <property type="match status" value="1"/>
</dbReference>
<dbReference type="Pfam" id="PF03478">
    <property type="entry name" value="Beta-prop_KIB1-4"/>
    <property type="match status" value="1"/>
</dbReference>
<reference key="1">
    <citation type="journal article" date="2000" name="Nature">
        <title>Sequence and analysis of chromosome 1 of the plant Arabidopsis thaliana.</title>
        <authorList>
            <person name="Theologis A."/>
            <person name="Ecker J.R."/>
            <person name="Palm C.J."/>
            <person name="Federspiel N.A."/>
            <person name="Kaul S."/>
            <person name="White O."/>
            <person name="Alonso J."/>
            <person name="Altafi H."/>
            <person name="Araujo R."/>
            <person name="Bowman C.L."/>
            <person name="Brooks S.Y."/>
            <person name="Buehler E."/>
            <person name="Chan A."/>
            <person name="Chao Q."/>
            <person name="Chen H."/>
            <person name="Cheuk R.F."/>
            <person name="Chin C.W."/>
            <person name="Chung M.K."/>
            <person name="Conn L."/>
            <person name="Conway A.B."/>
            <person name="Conway A.R."/>
            <person name="Creasy T.H."/>
            <person name="Dewar K."/>
            <person name="Dunn P."/>
            <person name="Etgu P."/>
            <person name="Feldblyum T.V."/>
            <person name="Feng J.-D."/>
            <person name="Fong B."/>
            <person name="Fujii C.Y."/>
            <person name="Gill J.E."/>
            <person name="Goldsmith A.D."/>
            <person name="Haas B."/>
            <person name="Hansen N.F."/>
            <person name="Hughes B."/>
            <person name="Huizar L."/>
            <person name="Hunter J.L."/>
            <person name="Jenkins J."/>
            <person name="Johnson-Hopson C."/>
            <person name="Khan S."/>
            <person name="Khaykin E."/>
            <person name="Kim C.J."/>
            <person name="Koo H.L."/>
            <person name="Kremenetskaia I."/>
            <person name="Kurtz D.B."/>
            <person name="Kwan A."/>
            <person name="Lam B."/>
            <person name="Langin-Hooper S."/>
            <person name="Lee A."/>
            <person name="Lee J.M."/>
            <person name="Lenz C.A."/>
            <person name="Li J.H."/>
            <person name="Li Y.-P."/>
            <person name="Lin X."/>
            <person name="Liu S.X."/>
            <person name="Liu Z.A."/>
            <person name="Luros J.S."/>
            <person name="Maiti R."/>
            <person name="Marziali A."/>
            <person name="Militscher J."/>
            <person name="Miranda M."/>
            <person name="Nguyen M."/>
            <person name="Nierman W.C."/>
            <person name="Osborne B.I."/>
            <person name="Pai G."/>
            <person name="Peterson J."/>
            <person name="Pham P.K."/>
            <person name="Rizzo M."/>
            <person name="Rooney T."/>
            <person name="Rowley D."/>
            <person name="Sakano H."/>
            <person name="Salzberg S.L."/>
            <person name="Schwartz J.R."/>
            <person name="Shinn P."/>
            <person name="Southwick A.M."/>
            <person name="Sun H."/>
            <person name="Tallon L.J."/>
            <person name="Tambunga G."/>
            <person name="Toriumi M.J."/>
            <person name="Town C.D."/>
            <person name="Utterback T."/>
            <person name="Van Aken S."/>
            <person name="Vaysberg M."/>
            <person name="Vysotskaia V.S."/>
            <person name="Walker M."/>
            <person name="Wu D."/>
            <person name="Yu G."/>
            <person name="Fraser C.M."/>
            <person name="Venter J.C."/>
            <person name="Davis R.W."/>
        </authorList>
    </citation>
    <scope>NUCLEOTIDE SEQUENCE [LARGE SCALE GENOMIC DNA]</scope>
    <source>
        <strain>cv. Columbia</strain>
    </source>
</reference>
<reference key="2">
    <citation type="journal article" date="2017" name="Plant J.">
        <title>Araport11: a complete reannotation of the Arabidopsis thaliana reference genome.</title>
        <authorList>
            <person name="Cheng C.Y."/>
            <person name="Krishnakumar V."/>
            <person name="Chan A.P."/>
            <person name="Thibaud-Nissen F."/>
            <person name="Schobel S."/>
            <person name="Town C.D."/>
        </authorList>
    </citation>
    <scope>GENOME REANNOTATION</scope>
    <source>
        <strain>cv. Columbia</strain>
    </source>
</reference>
<sequence length="360" mass="41588">MADWSTLPVDLLNMIAGRLFSNIELKRFRSICRSWRSSVPGAGKKNPFRTRPLILLNPNPNKPLTDHRRRGEFLSRSAFFRVTLSSSPSQGWLIKSDVDVSSGKLHLLDPLSRLPMEHSRKRVDLSEFTITEIREAYQVHDWRTRKETRPIFKRVALVKDKEGDNQVLGIRSTGKMMYWDIKTWKAKEEGYEFSDIIVHKGQTYALDSIGIVYWIRSDLKFIRFGPLVGDWTGDRRLVECCGEFYIVERLVGESTWKRKADDTGYEYAKTVGFKVYKFDDEQGKMMEVKSLGDKAFVIATDTCFSVLAHEFYGCLENAIYFTDDTMIKVFKLDNGNGSSIETTIYPYAQSCFQMFVPSFL</sequence>
<gene>
    <name type="ordered locus">At1g65770</name>
    <name type="ORF">F1E22.13</name>
</gene>
<feature type="chain" id="PRO_0000283345" description="Putative F-box protein At1g65770">
    <location>
        <begin position="1"/>
        <end position="360"/>
    </location>
</feature>
<feature type="domain" description="F-box">
    <location>
        <begin position="2"/>
        <end position="50"/>
    </location>
</feature>
<protein>
    <recommendedName>
        <fullName>Putative F-box protein At1g65770</fullName>
    </recommendedName>
</protein>
<keyword id="KW-1185">Reference proteome</keyword>
<accession>Q9SHX9</accession>